<feature type="signal peptide" evidence="3">
    <location>
        <begin position="1"/>
        <end position="17"/>
    </location>
</feature>
<feature type="propeptide" id="PRO_0000026315" description="Activation peptide" evidence="3">
    <location>
        <begin position="18"/>
        <end position="122"/>
    </location>
</feature>
<feature type="chain" id="PRO_0000026316" description="Cathepsin S">
    <location>
        <begin position="123"/>
        <end position="340"/>
    </location>
</feature>
<feature type="active site" evidence="1">
    <location>
        <position position="147"/>
    </location>
</feature>
<feature type="active site" evidence="1">
    <location>
        <position position="287"/>
    </location>
</feature>
<feature type="active site" evidence="1">
    <location>
        <position position="307"/>
    </location>
</feature>
<feature type="glycosylation site" description="N-linked (GlcNAc...) asparagine" evidence="3">
    <location>
        <position position="120"/>
    </location>
</feature>
<feature type="disulfide bond" evidence="1">
    <location>
        <begin position="134"/>
        <end position="233"/>
    </location>
</feature>
<feature type="disulfide bond" evidence="1">
    <location>
        <begin position="144"/>
        <end position="189"/>
    </location>
</feature>
<feature type="disulfide bond" evidence="1">
    <location>
        <begin position="178"/>
        <end position="222"/>
    </location>
</feature>
<feature type="disulfide bond" evidence="1">
    <location>
        <begin position="281"/>
        <end position="329"/>
    </location>
</feature>
<feature type="sequence conflict" description="In Ref. 2; CAA05360." evidence="9" ref="2">
    <original>Y</original>
    <variation>H</variation>
    <location>
        <position position="34"/>
    </location>
</feature>
<feature type="sequence conflict" description="In Ref. 1; AAB94925/AAC05781." evidence="9" ref="1">
    <original>L</original>
    <variation>S</variation>
    <location>
        <position position="97"/>
    </location>
</feature>
<feature type="sequence conflict" description="In Ref. 1; AAB94925/AAC05781." evidence="9" ref="1">
    <original>P</original>
    <variation>S</variation>
    <location>
        <position position="106"/>
    </location>
</feature>
<feature type="sequence conflict" description="In Ref. 3; CAA77184." evidence="9" ref="3">
    <original>A</original>
    <variation>S</variation>
    <location>
        <position position="146"/>
    </location>
</feature>
<feature type="sequence conflict" description="In Ref. 1; AAB94925 and 2; CAA05360." evidence="9" ref="1 2">
    <original>T</original>
    <variation>M</variation>
    <location>
        <position position="218"/>
    </location>
</feature>
<feature type="helix" evidence="10">
    <location>
        <begin position="129"/>
        <end position="132"/>
    </location>
</feature>
<feature type="helix" evidence="10">
    <location>
        <begin position="147"/>
        <end position="164"/>
    </location>
</feature>
<feature type="helix" evidence="10">
    <location>
        <begin position="172"/>
        <end position="178"/>
    </location>
</feature>
<feature type="turn" evidence="10">
    <location>
        <begin position="182"/>
        <end position="184"/>
    </location>
</feature>
<feature type="helix" evidence="11">
    <location>
        <begin position="188"/>
        <end position="190"/>
    </location>
</feature>
<feature type="helix" evidence="10">
    <location>
        <begin position="194"/>
        <end position="204"/>
    </location>
</feature>
<feature type="strand" evidence="10">
    <location>
        <begin position="207"/>
        <end position="209"/>
    </location>
</feature>
<feature type="turn" evidence="10">
    <location>
        <begin position="210"/>
        <end position="212"/>
    </location>
</feature>
<feature type="helix" evidence="10">
    <location>
        <begin position="226"/>
        <end position="228"/>
    </location>
</feature>
<feature type="strand" evidence="10">
    <location>
        <begin position="229"/>
        <end position="231"/>
    </location>
</feature>
<feature type="strand" evidence="10">
    <location>
        <begin position="234"/>
        <end position="238"/>
    </location>
</feature>
<feature type="helix" evidence="10">
    <location>
        <begin position="244"/>
        <end position="253"/>
    </location>
</feature>
<feature type="strand" evidence="10">
    <location>
        <begin position="257"/>
        <end position="261"/>
    </location>
</feature>
<feature type="helix" evidence="10">
    <location>
        <begin position="266"/>
        <end position="270"/>
    </location>
</feature>
<feature type="strand" evidence="11">
    <location>
        <begin position="273"/>
        <end position="276"/>
    </location>
</feature>
<feature type="strand" evidence="10">
    <location>
        <begin position="287"/>
        <end position="297"/>
    </location>
</feature>
<feature type="strand" evidence="10">
    <location>
        <begin position="300"/>
        <end position="306"/>
    </location>
</feature>
<feature type="strand" evidence="10">
    <location>
        <begin position="318"/>
        <end position="322"/>
    </location>
</feature>
<feature type="strand" evidence="10">
    <location>
        <begin position="324"/>
        <end position="327"/>
    </location>
</feature>
<feature type="helix" evidence="10">
    <location>
        <begin position="328"/>
        <end position="330"/>
    </location>
</feature>
<feature type="turn" evidence="10">
    <location>
        <begin position="331"/>
        <end position="333"/>
    </location>
</feature>
<feature type="strand" evidence="10">
    <location>
        <begin position="336"/>
        <end position="339"/>
    </location>
</feature>
<keyword id="KW-0002">3D-structure</keyword>
<keyword id="KW-0968">Cytoplasmic vesicle</keyword>
<keyword id="KW-1015">Disulfide bond</keyword>
<keyword id="KW-0325">Glycoprotein</keyword>
<keyword id="KW-0378">Hydrolase</keyword>
<keyword id="KW-0458">Lysosome</keyword>
<keyword id="KW-0645">Protease</keyword>
<keyword id="KW-1185">Reference proteome</keyword>
<keyword id="KW-0964">Secreted</keyword>
<keyword id="KW-0732">Signal</keyword>
<keyword id="KW-0788">Thiol protease</keyword>
<keyword id="KW-0865">Zymogen</keyword>
<reference key="1">
    <citation type="submission" date="1998-03" db="EMBL/GenBank/DDBJ databases">
        <authorList>
            <person name="Doh-ura K."/>
        </authorList>
    </citation>
    <scope>NUCLEOTIDE SEQUENCE [GENOMIC DNA / MRNA]</scope>
    <source>
        <strain>129/Sv</strain>
        <strain>BALB/cJ</strain>
        <tissue>Brain</tissue>
    </source>
</reference>
<reference key="2">
    <citation type="submission" date="1997-11" db="EMBL/GenBank/DDBJ databases">
        <authorList>
            <person name="Rommerskirch W."/>
        </authorList>
    </citation>
    <scope>NUCLEOTIDE SEQUENCE [MRNA]</scope>
    <source>
        <tissue>Spleen</tissue>
    </source>
</reference>
<reference key="3">
    <citation type="journal article" date="2009" name="PLoS Biol.">
        <title>Lineage-specific biology revealed by a finished genome assembly of the mouse.</title>
        <authorList>
            <person name="Church D.M."/>
            <person name="Goodstadt L."/>
            <person name="Hillier L.W."/>
            <person name="Zody M.C."/>
            <person name="Goldstein S."/>
            <person name="She X."/>
            <person name="Bult C.J."/>
            <person name="Agarwala R."/>
            <person name="Cherry J.L."/>
            <person name="DiCuccio M."/>
            <person name="Hlavina W."/>
            <person name="Kapustin Y."/>
            <person name="Meric P."/>
            <person name="Maglott D."/>
            <person name="Birtle Z."/>
            <person name="Marques A.C."/>
            <person name="Graves T."/>
            <person name="Zhou S."/>
            <person name="Teague B."/>
            <person name="Potamousis K."/>
            <person name="Churas C."/>
            <person name="Place M."/>
            <person name="Herschleb J."/>
            <person name="Runnheim R."/>
            <person name="Forrest D."/>
            <person name="Amos-Landgraf J."/>
            <person name="Schwartz D.C."/>
            <person name="Cheng Z."/>
            <person name="Lindblad-Toh K."/>
            <person name="Eichler E.E."/>
            <person name="Ponting C.P."/>
        </authorList>
    </citation>
    <scope>NUCLEOTIDE SEQUENCE [LARGE SCALE GENOMIC DNA]</scope>
    <source>
        <strain>C57BL/6J</strain>
    </source>
</reference>
<reference key="4">
    <citation type="journal article" date="1999" name="Biochim. Biophys. Acta">
        <title>Cathepsin expression during skeletal development.</title>
        <authorList>
            <person name="Soederstroem M."/>
            <person name="Salminen H."/>
            <person name="Glumoff V."/>
            <person name="Kirschke H."/>
            <person name="Aro H."/>
            <person name="Vuorio E."/>
        </authorList>
    </citation>
    <scope>NUCLEOTIDE SEQUENCE [MRNA] OF 144-306</scope>
    <scope>TISSUE SPECIFICITY</scope>
    <source>
        <strain>C57BL/6J</strain>
        <tissue>Cartilage</tissue>
    </source>
</reference>
<reference key="5">
    <citation type="journal article" date="1998" name="J. Biol. Chem.">
        <title>Gene expression in scrapie. Cloning of a new scrapie-responsive gene and the identification of increased levels of seven other mRNA transcripts.</title>
        <authorList>
            <person name="Dandoy-Dron F."/>
            <person name="Guillo F."/>
            <person name="Benboudjema L."/>
            <person name="Deslys J.-P."/>
            <person name="Lasmesas C."/>
            <person name="Dormont D."/>
            <person name="Tovey M.G."/>
            <person name="Dron M."/>
        </authorList>
    </citation>
    <scope>NUCLEOTIDE SEQUENCE [MRNA] OF 296-340</scope>
    <source>
        <strain>C57BL/6J</strain>
        <tissue>Brain</tissue>
    </source>
</reference>
<reference key="6">
    <citation type="journal article" date="1998" name="Science">
        <title>Cathepsin L: critical role in Ii degradation and CD4 T cell selection in the thymus.</title>
        <authorList>
            <person name="Nakagawa T."/>
            <person name="Roth W."/>
            <person name="Wong P."/>
            <person name="Nelson A."/>
            <person name="Farr A."/>
            <person name="Deussing J."/>
            <person name="Villadangos J.A."/>
            <person name="Ploegh H."/>
            <person name="Peters C."/>
            <person name="Rudensky A.Y."/>
        </authorList>
    </citation>
    <scope>TISSUE SPECIFICITY</scope>
</reference>
<reference key="7">
    <citation type="journal article" date="2010" name="Cell">
        <title>A tissue-specific atlas of mouse protein phosphorylation and expression.</title>
        <authorList>
            <person name="Huttlin E.L."/>
            <person name="Jedrychowski M.P."/>
            <person name="Elias J.E."/>
            <person name="Goswami T."/>
            <person name="Rad R."/>
            <person name="Beausoleil S.A."/>
            <person name="Villen J."/>
            <person name="Haas W."/>
            <person name="Sowa M.E."/>
            <person name="Gygi S.P."/>
        </authorList>
    </citation>
    <scope>IDENTIFICATION BY MASS SPECTROMETRY [LARGE SCALE ANALYSIS]</scope>
    <source>
        <tissue>Brain</tissue>
        <tissue>Kidney</tissue>
        <tissue>Liver</tissue>
        <tissue>Lung</tissue>
        <tissue>Spleen</tissue>
        <tissue>Testis</tissue>
    </source>
</reference>
<accession>O70370</accession>
<accession>E9QK18</accession>
<accession>O54973</accession>
<organism>
    <name type="scientific">Mus musculus</name>
    <name type="common">Mouse</name>
    <dbReference type="NCBI Taxonomy" id="10090"/>
    <lineage>
        <taxon>Eukaryota</taxon>
        <taxon>Metazoa</taxon>
        <taxon>Chordata</taxon>
        <taxon>Craniata</taxon>
        <taxon>Vertebrata</taxon>
        <taxon>Euteleostomi</taxon>
        <taxon>Mammalia</taxon>
        <taxon>Eutheria</taxon>
        <taxon>Euarchontoglires</taxon>
        <taxon>Glires</taxon>
        <taxon>Rodentia</taxon>
        <taxon>Myomorpha</taxon>
        <taxon>Muroidea</taxon>
        <taxon>Muridae</taxon>
        <taxon>Murinae</taxon>
        <taxon>Mus</taxon>
        <taxon>Mus</taxon>
    </lineage>
</organism>
<proteinExistence type="evidence at protein level"/>
<name>CATS_MOUSE</name>
<evidence type="ECO:0000250" key="1"/>
<evidence type="ECO:0000250" key="2">
    <source>
        <dbReference type="UniProtKB" id="P25774"/>
    </source>
</evidence>
<evidence type="ECO:0000255" key="3"/>
<evidence type="ECO:0000255" key="4">
    <source>
        <dbReference type="PROSITE-ProRule" id="PRU10088"/>
    </source>
</evidence>
<evidence type="ECO:0000255" key="5">
    <source>
        <dbReference type="PROSITE-ProRule" id="PRU10089"/>
    </source>
</evidence>
<evidence type="ECO:0000255" key="6">
    <source>
        <dbReference type="PROSITE-ProRule" id="PRU10090"/>
    </source>
</evidence>
<evidence type="ECO:0000269" key="7">
    <source>
    </source>
</evidence>
<evidence type="ECO:0000269" key="8">
    <source>
    </source>
</evidence>
<evidence type="ECO:0000305" key="9"/>
<evidence type="ECO:0007829" key="10">
    <source>
        <dbReference type="PDB" id="4BS6"/>
    </source>
</evidence>
<evidence type="ECO:0007829" key="11">
    <source>
        <dbReference type="PDB" id="4MZO"/>
    </source>
</evidence>
<comment type="function">
    <text evidence="2">Thiol protease. Key protease responsible for the removal of the invariant chain from MHC class II molecules and MHC class II antigen presentation. The bond-specificity of this proteinase is in part similar to the specificities of cathepsin L.</text>
</comment>
<comment type="catalytic activity">
    <reaction>
        <text>Similar to cathepsin L, but with much less activity on Z-Phe-Arg-|-NHMec, and more activity on the Z-Val-Val-Arg-|-Xaa compound.</text>
        <dbReference type="EC" id="3.4.22.27"/>
    </reaction>
</comment>
<comment type="subcellular location">
    <subcellularLocation>
        <location evidence="2">Lysosome</location>
    </subcellularLocation>
    <subcellularLocation>
        <location evidence="2">Secreted</location>
    </subcellularLocation>
    <subcellularLocation>
        <location evidence="2">Cytoplasmic vesicle</location>
        <location evidence="2">Phagosome</location>
    </subcellularLocation>
</comment>
<comment type="tissue specificity">
    <text evidence="7 8">Widely expressed with highest expression found in non-skeletal tissues. Relatively high levels found in skeletal tissues. Expressed in spleen, B cells, dendritic cells and macrophages (PubMed:9545226).</text>
</comment>
<comment type="similarity">
    <text evidence="4 5 6">Belongs to the peptidase C1 family.</text>
</comment>
<comment type="sequence caution" evidence="9">
    <conflict type="frameshift">
        <sequence resource="EMBL-CDS" id="CAA05360"/>
    </conflict>
</comment>
<gene>
    <name type="primary">Ctss</name>
    <name type="synonym">Cats</name>
</gene>
<dbReference type="EC" id="3.4.22.27"/>
<dbReference type="EMBL" id="AF051732">
    <property type="protein sequence ID" value="AAC05781.1"/>
    <property type="molecule type" value="Genomic_DNA"/>
</dbReference>
<dbReference type="EMBL" id="AF051727">
    <property type="protein sequence ID" value="AAC05781.1"/>
    <property type="status" value="JOINED"/>
    <property type="molecule type" value="Genomic_DNA"/>
</dbReference>
<dbReference type="EMBL" id="AF051728">
    <property type="protein sequence ID" value="AAC05781.1"/>
    <property type="status" value="JOINED"/>
    <property type="molecule type" value="Genomic_DNA"/>
</dbReference>
<dbReference type="EMBL" id="AF051729">
    <property type="protein sequence ID" value="AAC05781.1"/>
    <property type="status" value="JOINED"/>
    <property type="molecule type" value="Genomic_DNA"/>
</dbReference>
<dbReference type="EMBL" id="AF051726">
    <property type="protein sequence ID" value="AAC05781.1"/>
    <property type="status" value="JOINED"/>
    <property type="molecule type" value="Genomic_DNA"/>
</dbReference>
<dbReference type="EMBL" id="AF051730">
    <property type="protein sequence ID" value="AAC05781.1"/>
    <property type="status" value="JOINED"/>
    <property type="molecule type" value="Genomic_DNA"/>
</dbReference>
<dbReference type="EMBL" id="AF051731">
    <property type="protein sequence ID" value="AAC05781.1"/>
    <property type="status" value="JOINED"/>
    <property type="molecule type" value="Genomic_DNA"/>
</dbReference>
<dbReference type="EMBL" id="AF038546">
    <property type="protein sequence ID" value="AAB94925.1"/>
    <property type="molecule type" value="mRNA"/>
</dbReference>
<dbReference type="EMBL" id="AJ002386">
    <property type="protein sequence ID" value="CAA05360.1"/>
    <property type="status" value="ALT_FRAME"/>
    <property type="molecule type" value="mRNA"/>
</dbReference>
<dbReference type="EMBL" id="AC092203">
    <property type="status" value="NOT_ANNOTATED_CDS"/>
    <property type="molecule type" value="Genomic_DNA"/>
</dbReference>
<dbReference type="EMBL" id="Y18466">
    <property type="protein sequence ID" value="CAA77184.1"/>
    <property type="molecule type" value="mRNA"/>
</dbReference>
<dbReference type="EMBL" id="AJ223208">
    <property type="protein sequence ID" value="CAA11182.1"/>
    <property type="molecule type" value="mRNA"/>
</dbReference>
<dbReference type="CCDS" id="CCDS50992.1"/>
<dbReference type="RefSeq" id="NP_067256.4">
    <property type="nucleotide sequence ID" value="NM_021281.3"/>
</dbReference>
<dbReference type="PDB" id="4BPV">
    <property type="method" value="X-ray"/>
    <property type="resolution" value="2.00 A"/>
    <property type="chains" value="A/B/C/D/E/K=116-340"/>
</dbReference>
<dbReference type="PDB" id="4BQV">
    <property type="method" value="X-ray"/>
    <property type="resolution" value="1.70 A"/>
    <property type="chains" value="A/B/C/D/E/F/G/H=116-340"/>
</dbReference>
<dbReference type="PDB" id="4BS5">
    <property type="method" value="X-ray"/>
    <property type="resolution" value="1.25 A"/>
    <property type="chains" value="A=116-340"/>
</dbReference>
<dbReference type="PDB" id="4BS6">
    <property type="method" value="X-ray"/>
    <property type="resolution" value="1.20 A"/>
    <property type="chains" value="A/B=116-340"/>
</dbReference>
<dbReference type="PDB" id="4BSQ">
    <property type="method" value="X-ray"/>
    <property type="resolution" value="1.96 A"/>
    <property type="chains" value="A=116-340"/>
</dbReference>
<dbReference type="PDB" id="4MZO">
    <property type="method" value="X-ray"/>
    <property type="resolution" value="1.47 A"/>
    <property type="chains" value="A/B/C/D/E/F/G/H=116-340"/>
</dbReference>
<dbReference type="PDB" id="4MZS">
    <property type="method" value="X-ray"/>
    <property type="resolution" value="1.85 A"/>
    <property type="chains" value="A/B=116-340"/>
</dbReference>
<dbReference type="PDBsum" id="4BPV"/>
<dbReference type="PDBsum" id="4BQV"/>
<dbReference type="PDBsum" id="4BS5"/>
<dbReference type="PDBsum" id="4BS6"/>
<dbReference type="PDBsum" id="4BSQ"/>
<dbReference type="PDBsum" id="4MZO"/>
<dbReference type="PDBsum" id="4MZS"/>
<dbReference type="SMR" id="O70370"/>
<dbReference type="BioGRID" id="198976">
    <property type="interactions" value="2"/>
</dbReference>
<dbReference type="FunCoup" id="O70370">
    <property type="interactions" value="488"/>
</dbReference>
<dbReference type="STRING" id="10090.ENSMUSP00000015667"/>
<dbReference type="BindingDB" id="O70370"/>
<dbReference type="ChEMBL" id="CHEMBL4098"/>
<dbReference type="GuidetoPHARMACOLOGY" id="2353"/>
<dbReference type="MEROPS" id="C01.034"/>
<dbReference type="GlyCosmos" id="O70370">
    <property type="glycosylation" value="1 site, No reported glycans"/>
</dbReference>
<dbReference type="GlyGen" id="O70370">
    <property type="glycosylation" value="1 site"/>
</dbReference>
<dbReference type="iPTMnet" id="O70370"/>
<dbReference type="PhosphoSitePlus" id="O70370"/>
<dbReference type="SwissPalm" id="O70370"/>
<dbReference type="CPTAC" id="non-CPTAC-3897"/>
<dbReference type="PaxDb" id="10090-ENSMUSP00000015667"/>
<dbReference type="ProteomicsDB" id="265335"/>
<dbReference type="Antibodypedia" id="849">
    <property type="antibodies" value="481 antibodies from 37 providers"/>
</dbReference>
<dbReference type="DNASU" id="13040"/>
<dbReference type="Ensembl" id="ENSMUST00000116304.3">
    <property type="protein sequence ID" value="ENSMUSP00000112006.3"/>
    <property type="gene ID" value="ENSMUSG00000038642.11"/>
</dbReference>
<dbReference type="GeneID" id="13040"/>
<dbReference type="KEGG" id="mmu:13040"/>
<dbReference type="UCSC" id="uc008qjz.3">
    <property type="organism name" value="mouse"/>
</dbReference>
<dbReference type="AGR" id="MGI:107341"/>
<dbReference type="CTD" id="1520"/>
<dbReference type="MGI" id="MGI:107341">
    <property type="gene designation" value="Ctss"/>
</dbReference>
<dbReference type="VEuPathDB" id="HostDB:ENSMUSG00000038642"/>
<dbReference type="eggNOG" id="KOG1543">
    <property type="taxonomic scope" value="Eukaryota"/>
</dbReference>
<dbReference type="GeneTree" id="ENSGT00940000155176"/>
<dbReference type="HOGENOM" id="CLU_012184_1_2_1"/>
<dbReference type="InParanoid" id="O70370"/>
<dbReference type="OMA" id="KSNPNQM"/>
<dbReference type="OrthoDB" id="190265at2759"/>
<dbReference type="BRENDA" id="3.4.22.27">
    <property type="organism ID" value="3474"/>
</dbReference>
<dbReference type="Reactome" id="R-MMU-1474228">
    <property type="pathway name" value="Degradation of the extracellular matrix"/>
</dbReference>
<dbReference type="Reactome" id="R-MMU-1679131">
    <property type="pathway name" value="Trafficking and processing of endosomal TLR"/>
</dbReference>
<dbReference type="Reactome" id="R-MMU-2022090">
    <property type="pathway name" value="Assembly of collagen fibrils and other multimeric structures"/>
</dbReference>
<dbReference type="Reactome" id="R-MMU-2132295">
    <property type="pathway name" value="MHC class II antigen presentation"/>
</dbReference>
<dbReference type="Reactome" id="R-MMU-6798695">
    <property type="pathway name" value="Neutrophil degranulation"/>
</dbReference>
<dbReference type="BioGRID-ORCS" id="13040">
    <property type="hits" value="2 hits in 72 CRISPR screens"/>
</dbReference>
<dbReference type="ChiTaRS" id="Ctss">
    <property type="organism name" value="mouse"/>
</dbReference>
<dbReference type="EvolutionaryTrace" id="O70370"/>
<dbReference type="PRO" id="PR:O70370"/>
<dbReference type="Proteomes" id="UP000000589">
    <property type="component" value="Chromosome 3"/>
</dbReference>
<dbReference type="RNAct" id="O70370">
    <property type="molecule type" value="protein"/>
</dbReference>
<dbReference type="Bgee" id="ENSMUSG00000038642">
    <property type="expression patterns" value="Expressed in stroma of bone marrow and 246 other cell types or tissues"/>
</dbReference>
<dbReference type="ExpressionAtlas" id="O70370">
    <property type="expression patterns" value="baseline and differential"/>
</dbReference>
<dbReference type="GO" id="GO:0031905">
    <property type="term" value="C:early endosome lumen"/>
    <property type="evidence" value="ECO:0000304"/>
    <property type="project" value="Reactome"/>
</dbReference>
<dbReference type="GO" id="GO:0005615">
    <property type="term" value="C:extracellular space"/>
    <property type="evidence" value="ECO:0000250"/>
    <property type="project" value="UniProtKB"/>
</dbReference>
<dbReference type="GO" id="GO:0005764">
    <property type="term" value="C:lysosome"/>
    <property type="evidence" value="ECO:0000314"/>
    <property type="project" value="MGI"/>
</dbReference>
<dbReference type="GO" id="GO:0016020">
    <property type="term" value="C:membrane"/>
    <property type="evidence" value="ECO:0000314"/>
    <property type="project" value="MGI"/>
</dbReference>
<dbReference type="GO" id="GO:0045335">
    <property type="term" value="C:phagocytic vesicle"/>
    <property type="evidence" value="ECO:0000250"/>
    <property type="project" value="UniProtKB"/>
</dbReference>
<dbReference type="GO" id="GO:0004197">
    <property type="term" value="F:cysteine-type endopeptidase activity"/>
    <property type="evidence" value="ECO:0000269"/>
    <property type="project" value="Reactome"/>
</dbReference>
<dbReference type="GO" id="GO:0008233">
    <property type="term" value="F:peptidase activity"/>
    <property type="evidence" value="ECO:0000314"/>
    <property type="project" value="MGI"/>
</dbReference>
<dbReference type="GO" id="GO:0019886">
    <property type="term" value="P:antigen processing and presentation of exogenous peptide antigen via MHC class II"/>
    <property type="evidence" value="ECO:0000250"/>
    <property type="project" value="UniProtKB"/>
</dbReference>
<dbReference type="GO" id="GO:0034769">
    <property type="term" value="P:basement membrane disassembly"/>
    <property type="evidence" value="ECO:0000315"/>
    <property type="project" value="BHF-UCL"/>
</dbReference>
<dbReference type="GO" id="GO:2001259">
    <property type="term" value="P:positive regulation of cation channel activity"/>
    <property type="evidence" value="ECO:0000314"/>
    <property type="project" value="CACAO"/>
</dbReference>
<dbReference type="GO" id="GO:0050729">
    <property type="term" value="P:positive regulation of inflammatory response"/>
    <property type="evidence" value="ECO:0000316"/>
    <property type="project" value="MGI"/>
</dbReference>
<dbReference type="GO" id="GO:0006508">
    <property type="term" value="P:proteolysis"/>
    <property type="evidence" value="ECO:0000314"/>
    <property type="project" value="MGI"/>
</dbReference>
<dbReference type="GO" id="GO:0051603">
    <property type="term" value="P:proteolysis involved in protein catabolic process"/>
    <property type="evidence" value="ECO:0000315"/>
    <property type="project" value="BHF-UCL"/>
</dbReference>
<dbReference type="CDD" id="cd02248">
    <property type="entry name" value="Peptidase_C1A"/>
    <property type="match status" value="1"/>
</dbReference>
<dbReference type="FunFam" id="3.90.70.10:FF:000006">
    <property type="entry name" value="Cathepsin S"/>
    <property type="match status" value="1"/>
</dbReference>
<dbReference type="Gene3D" id="3.90.70.10">
    <property type="entry name" value="Cysteine proteinases"/>
    <property type="match status" value="1"/>
</dbReference>
<dbReference type="InterPro" id="IPR038765">
    <property type="entry name" value="Papain-like_cys_pep_sf"/>
</dbReference>
<dbReference type="InterPro" id="IPR025661">
    <property type="entry name" value="Pept_asp_AS"/>
</dbReference>
<dbReference type="InterPro" id="IPR000169">
    <property type="entry name" value="Pept_cys_AS"/>
</dbReference>
<dbReference type="InterPro" id="IPR025660">
    <property type="entry name" value="Pept_his_AS"/>
</dbReference>
<dbReference type="InterPro" id="IPR013128">
    <property type="entry name" value="Peptidase_C1A"/>
</dbReference>
<dbReference type="InterPro" id="IPR000668">
    <property type="entry name" value="Peptidase_C1A_C"/>
</dbReference>
<dbReference type="InterPro" id="IPR039417">
    <property type="entry name" value="Peptidase_C1A_papain-like"/>
</dbReference>
<dbReference type="InterPro" id="IPR013201">
    <property type="entry name" value="Prot_inhib_I29"/>
</dbReference>
<dbReference type="PANTHER" id="PTHR12411">
    <property type="entry name" value="CYSTEINE PROTEASE FAMILY C1-RELATED"/>
    <property type="match status" value="1"/>
</dbReference>
<dbReference type="Pfam" id="PF08246">
    <property type="entry name" value="Inhibitor_I29"/>
    <property type="match status" value="1"/>
</dbReference>
<dbReference type="Pfam" id="PF00112">
    <property type="entry name" value="Peptidase_C1"/>
    <property type="match status" value="1"/>
</dbReference>
<dbReference type="PRINTS" id="PR00705">
    <property type="entry name" value="PAPAIN"/>
</dbReference>
<dbReference type="SMART" id="SM00848">
    <property type="entry name" value="Inhibitor_I29"/>
    <property type="match status" value="1"/>
</dbReference>
<dbReference type="SMART" id="SM00645">
    <property type="entry name" value="Pept_C1"/>
    <property type="match status" value="1"/>
</dbReference>
<dbReference type="SUPFAM" id="SSF54001">
    <property type="entry name" value="Cysteine proteinases"/>
    <property type="match status" value="1"/>
</dbReference>
<dbReference type="PROSITE" id="PS00640">
    <property type="entry name" value="THIOL_PROTEASE_ASN"/>
    <property type="match status" value="1"/>
</dbReference>
<dbReference type="PROSITE" id="PS00139">
    <property type="entry name" value="THIOL_PROTEASE_CYS"/>
    <property type="match status" value="1"/>
</dbReference>
<dbReference type="PROSITE" id="PS00639">
    <property type="entry name" value="THIOL_PROTEASE_HIS"/>
    <property type="match status" value="1"/>
</dbReference>
<sequence>MRAPGHAAIRWLFWMPLVCSVAMEQLQRDPTLDYHWDLWKKTHEKEYKDKNEEEVRRLIWEKNLKFIMIHNLEYSMGMHTYQVGMNDMGDMTNEEILCRMGALRIPRQSPKTVTFRSYSNRTLPDTVDWREKGCVTEVKYQGSCGACWAFSAVGALEGQLKLKTGKLISLSAQNLVDCSNEEKYGNKGCGGGYMTEAFQYIIDNGGIEADASYPYKATDEKCHYNSKNRAATCSRYIQLPFGDEDALKEAVATKGPVSVGIDASHSSFFFYKSGVYDDPSCTGNVNHGVLVVGYGTLDGKDYWLVKNSWGLNFGDQGYIRMARNNKNHCGIASYCSYPEI</sequence>
<protein>
    <recommendedName>
        <fullName>Cathepsin S</fullName>
        <ecNumber>3.4.22.27</ecNumber>
    </recommendedName>
</protein>